<dbReference type="EMBL" id="CP000140">
    <property type="protein sequence ID" value="ABR44099.1"/>
    <property type="molecule type" value="Genomic_DNA"/>
</dbReference>
<dbReference type="RefSeq" id="WP_005853974.1">
    <property type="nucleotide sequence ID" value="NZ_LR215978.1"/>
</dbReference>
<dbReference type="SMR" id="A6LEI5"/>
<dbReference type="STRING" id="435591.BDI_2374"/>
<dbReference type="PaxDb" id="435591-BDI_2374"/>
<dbReference type="GeneID" id="93522367"/>
<dbReference type="KEGG" id="pdi:BDI_2374"/>
<dbReference type="eggNOG" id="COG0092">
    <property type="taxonomic scope" value="Bacteria"/>
</dbReference>
<dbReference type="HOGENOM" id="CLU_058591_0_2_10"/>
<dbReference type="BioCyc" id="PDIS435591:G1G5A-2439-MONOMER"/>
<dbReference type="Proteomes" id="UP000000566">
    <property type="component" value="Chromosome"/>
</dbReference>
<dbReference type="GO" id="GO:0022627">
    <property type="term" value="C:cytosolic small ribosomal subunit"/>
    <property type="evidence" value="ECO:0007669"/>
    <property type="project" value="TreeGrafter"/>
</dbReference>
<dbReference type="GO" id="GO:0003729">
    <property type="term" value="F:mRNA binding"/>
    <property type="evidence" value="ECO:0007669"/>
    <property type="project" value="UniProtKB-UniRule"/>
</dbReference>
<dbReference type="GO" id="GO:0019843">
    <property type="term" value="F:rRNA binding"/>
    <property type="evidence" value="ECO:0007669"/>
    <property type="project" value="UniProtKB-UniRule"/>
</dbReference>
<dbReference type="GO" id="GO:0003735">
    <property type="term" value="F:structural constituent of ribosome"/>
    <property type="evidence" value="ECO:0007669"/>
    <property type="project" value="InterPro"/>
</dbReference>
<dbReference type="GO" id="GO:0006412">
    <property type="term" value="P:translation"/>
    <property type="evidence" value="ECO:0007669"/>
    <property type="project" value="UniProtKB-UniRule"/>
</dbReference>
<dbReference type="CDD" id="cd02412">
    <property type="entry name" value="KH-II_30S_S3"/>
    <property type="match status" value="1"/>
</dbReference>
<dbReference type="FunFam" id="3.30.1140.32:FF:000007">
    <property type="entry name" value="30S ribosomal protein S3"/>
    <property type="match status" value="1"/>
</dbReference>
<dbReference type="FunFam" id="3.30.300.20:FF:000001">
    <property type="entry name" value="30S ribosomal protein S3"/>
    <property type="match status" value="1"/>
</dbReference>
<dbReference type="Gene3D" id="3.30.300.20">
    <property type="match status" value="1"/>
</dbReference>
<dbReference type="Gene3D" id="3.30.1140.32">
    <property type="entry name" value="Ribosomal protein S3, C-terminal domain"/>
    <property type="match status" value="1"/>
</dbReference>
<dbReference type="HAMAP" id="MF_01309_B">
    <property type="entry name" value="Ribosomal_uS3_B"/>
    <property type="match status" value="1"/>
</dbReference>
<dbReference type="InterPro" id="IPR004087">
    <property type="entry name" value="KH_dom"/>
</dbReference>
<dbReference type="InterPro" id="IPR015946">
    <property type="entry name" value="KH_dom-like_a/b"/>
</dbReference>
<dbReference type="InterPro" id="IPR004044">
    <property type="entry name" value="KH_dom_type_2"/>
</dbReference>
<dbReference type="InterPro" id="IPR009019">
    <property type="entry name" value="KH_sf_prok-type"/>
</dbReference>
<dbReference type="InterPro" id="IPR036419">
    <property type="entry name" value="Ribosomal_S3_C_sf"/>
</dbReference>
<dbReference type="InterPro" id="IPR005704">
    <property type="entry name" value="Ribosomal_uS3_bac-typ"/>
</dbReference>
<dbReference type="InterPro" id="IPR001351">
    <property type="entry name" value="Ribosomal_uS3_C"/>
</dbReference>
<dbReference type="InterPro" id="IPR018280">
    <property type="entry name" value="Ribosomal_uS3_CS"/>
</dbReference>
<dbReference type="NCBIfam" id="TIGR01009">
    <property type="entry name" value="rpsC_bact"/>
    <property type="match status" value="1"/>
</dbReference>
<dbReference type="PANTHER" id="PTHR11760">
    <property type="entry name" value="30S/40S RIBOSOMAL PROTEIN S3"/>
    <property type="match status" value="1"/>
</dbReference>
<dbReference type="PANTHER" id="PTHR11760:SF19">
    <property type="entry name" value="SMALL RIBOSOMAL SUBUNIT PROTEIN US3C"/>
    <property type="match status" value="1"/>
</dbReference>
<dbReference type="Pfam" id="PF07650">
    <property type="entry name" value="KH_2"/>
    <property type="match status" value="1"/>
</dbReference>
<dbReference type="Pfam" id="PF00189">
    <property type="entry name" value="Ribosomal_S3_C"/>
    <property type="match status" value="1"/>
</dbReference>
<dbReference type="SMART" id="SM00322">
    <property type="entry name" value="KH"/>
    <property type="match status" value="1"/>
</dbReference>
<dbReference type="SUPFAM" id="SSF54814">
    <property type="entry name" value="Prokaryotic type KH domain (KH-domain type II)"/>
    <property type="match status" value="1"/>
</dbReference>
<dbReference type="SUPFAM" id="SSF54821">
    <property type="entry name" value="Ribosomal protein S3 C-terminal domain"/>
    <property type="match status" value="1"/>
</dbReference>
<dbReference type="PROSITE" id="PS50823">
    <property type="entry name" value="KH_TYPE_2"/>
    <property type="match status" value="1"/>
</dbReference>
<dbReference type="PROSITE" id="PS00548">
    <property type="entry name" value="RIBOSOMAL_S3"/>
    <property type="match status" value="1"/>
</dbReference>
<proteinExistence type="inferred from homology"/>
<keyword id="KW-1185">Reference proteome</keyword>
<keyword id="KW-0687">Ribonucleoprotein</keyword>
<keyword id="KW-0689">Ribosomal protein</keyword>
<keyword id="KW-0694">RNA-binding</keyword>
<keyword id="KW-0699">rRNA-binding</keyword>
<evidence type="ECO:0000255" key="1">
    <source>
        <dbReference type="HAMAP-Rule" id="MF_01309"/>
    </source>
</evidence>
<evidence type="ECO:0000256" key="2">
    <source>
        <dbReference type="SAM" id="MobiDB-lite"/>
    </source>
</evidence>
<evidence type="ECO:0000305" key="3"/>
<comment type="function">
    <text evidence="1">Binds the lower part of the 30S subunit head. Binds mRNA in the 70S ribosome, positioning it for translation.</text>
</comment>
<comment type="subunit">
    <text evidence="1">Part of the 30S ribosomal subunit. Forms a tight complex with proteins S10 and S14.</text>
</comment>
<comment type="similarity">
    <text evidence="1">Belongs to the universal ribosomal protein uS3 family.</text>
</comment>
<name>RS3_PARD8</name>
<accession>A6LEI5</accession>
<reference key="1">
    <citation type="journal article" date="2007" name="PLoS Biol.">
        <title>Evolution of symbiotic bacteria in the distal human intestine.</title>
        <authorList>
            <person name="Xu J."/>
            <person name="Mahowald M.A."/>
            <person name="Ley R.E."/>
            <person name="Lozupone C.A."/>
            <person name="Hamady M."/>
            <person name="Martens E.C."/>
            <person name="Henrissat B."/>
            <person name="Coutinho P.M."/>
            <person name="Minx P."/>
            <person name="Latreille P."/>
            <person name="Cordum H."/>
            <person name="Van Brunt A."/>
            <person name="Kim K."/>
            <person name="Fulton R.S."/>
            <person name="Fulton L.A."/>
            <person name="Clifton S.W."/>
            <person name="Wilson R.K."/>
            <person name="Knight R.D."/>
            <person name="Gordon J.I."/>
        </authorList>
    </citation>
    <scope>NUCLEOTIDE SEQUENCE [LARGE SCALE GENOMIC DNA]</scope>
    <source>
        <strain>ATCC 8503 / DSM 20701 / CIP 104284 / JCM 5825 / NCTC 11152</strain>
    </source>
</reference>
<protein>
    <recommendedName>
        <fullName evidence="1">Small ribosomal subunit protein uS3</fullName>
    </recommendedName>
    <alternativeName>
        <fullName evidence="3">30S ribosomal protein S3</fullName>
    </alternativeName>
</protein>
<gene>
    <name evidence="1" type="primary">rpsC</name>
    <name type="ordered locus">BDI_2374</name>
</gene>
<sequence>MGQKVNPISNRLGIIRGWDSNWYGGKNYGDTLLEDSKIRKYLNARLAKASVSRIVIERTLKLITITVCTSRPGIIIGKGGQEVDKLKEELKKITDKEVQINIFEVKRPELDAVIVANNIARQLEGKIAYRRAVKMAIASTMRMGAEGIKIQISGRLNGAEMARSEMYKEGRTPLHTLRADIDYALAEALTKVGLLGVKVWICRGEVYGKRDLAPSFTAAKETGRRNDNAGGNRDKNFKRKRANR</sequence>
<organism>
    <name type="scientific">Parabacteroides distasonis (strain ATCC 8503 / DSM 20701 / CIP 104284 / JCM 5825 / NCTC 11152)</name>
    <dbReference type="NCBI Taxonomy" id="435591"/>
    <lineage>
        <taxon>Bacteria</taxon>
        <taxon>Pseudomonadati</taxon>
        <taxon>Bacteroidota</taxon>
        <taxon>Bacteroidia</taxon>
        <taxon>Bacteroidales</taxon>
        <taxon>Tannerellaceae</taxon>
        <taxon>Parabacteroides</taxon>
    </lineage>
</organism>
<feature type="chain" id="PRO_1000086140" description="Small ribosomal subunit protein uS3">
    <location>
        <begin position="1"/>
        <end position="244"/>
    </location>
</feature>
<feature type="domain" description="KH type-2" evidence="1">
    <location>
        <begin position="38"/>
        <end position="106"/>
    </location>
</feature>
<feature type="region of interest" description="Disordered" evidence="2">
    <location>
        <begin position="222"/>
        <end position="244"/>
    </location>
</feature>
<feature type="compositionally biased region" description="Basic and acidic residues" evidence="2">
    <location>
        <begin position="222"/>
        <end position="235"/>
    </location>
</feature>